<name>RIMM_STAAB</name>
<proteinExistence type="inferred from homology"/>
<protein>
    <recommendedName>
        <fullName evidence="1">Ribosome maturation factor RimM</fullName>
    </recommendedName>
</protein>
<organism>
    <name type="scientific">Staphylococcus aureus (strain bovine RF122 / ET3-1)</name>
    <dbReference type="NCBI Taxonomy" id="273036"/>
    <lineage>
        <taxon>Bacteria</taxon>
        <taxon>Bacillati</taxon>
        <taxon>Bacillota</taxon>
        <taxon>Bacilli</taxon>
        <taxon>Bacillales</taxon>
        <taxon>Staphylococcaceae</taxon>
        <taxon>Staphylococcus</taxon>
    </lineage>
</organism>
<keyword id="KW-0143">Chaperone</keyword>
<keyword id="KW-0963">Cytoplasm</keyword>
<keyword id="KW-0690">Ribosome biogenesis</keyword>
<keyword id="KW-0698">rRNA processing</keyword>
<sequence>MRVEVGQIVNTHGIKGEIKVKSNSDFTDVRFQPGQVLTVVHNNNDLEYTVKSHRVHKGLHMLTFEGINNINDIEHLKGSSIYQERDHEDIVLEENEYYYSDIIGCTVFDDQETPIGRVINIFETGANDVWVIKGSKEYLIPYIADVVKEVDVENKKIIITPMEGLLD</sequence>
<comment type="function">
    <text evidence="1">An accessory protein needed during the final step in the assembly of 30S ribosomal subunit, possibly for assembly of the head region. Essential for efficient processing of 16S rRNA. May be needed both before and after RbfA during the maturation of 16S rRNA. It has affinity for free ribosomal 30S subunits but not for 70S ribosomes.</text>
</comment>
<comment type="subunit">
    <text evidence="1">Binds ribosomal protein uS19.</text>
</comment>
<comment type="subcellular location">
    <subcellularLocation>
        <location evidence="1">Cytoplasm</location>
    </subcellularLocation>
</comment>
<comment type="domain">
    <text evidence="1">The PRC barrel domain binds ribosomal protein uS19.</text>
</comment>
<comment type="similarity">
    <text evidence="1">Belongs to the RimM family.</text>
</comment>
<feature type="chain" id="PRO_0000244170" description="Ribosome maturation factor RimM">
    <location>
        <begin position="1"/>
        <end position="167"/>
    </location>
</feature>
<feature type="domain" description="PRC barrel" evidence="1">
    <location>
        <begin position="94"/>
        <end position="165"/>
    </location>
</feature>
<dbReference type="EMBL" id="AJ938182">
    <property type="protein sequence ID" value="CAI80792.1"/>
    <property type="molecule type" value="Genomic_DNA"/>
</dbReference>
<dbReference type="RefSeq" id="WP_001261990.1">
    <property type="nucleotide sequence ID" value="NC_007622.1"/>
</dbReference>
<dbReference type="SMR" id="Q2YXK2"/>
<dbReference type="KEGG" id="sab:SAB1103"/>
<dbReference type="HOGENOM" id="CLU_077636_3_1_9"/>
<dbReference type="GO" id="GO:0005737">
    <property type="term" value="C:cytoplasm"/>
    <property type="evidence" value="ECO:0007669"/>
    <property type="project" value="UniProtKB-SubCell"/>
</dbReference>
<dbReference type="GO" id="GO:0005840">
    <property type="term" value="C:ribosome"/>
    <property type="evidence" value="ECO:0007669"/>
    <property type="project" value="InterPro"/>
</dbReference>
<dbReference type="GO" id="GO:0043022">
    <property type="term" value="F:ribosome binding"/>
    <property type="evidence" value="ECO:0007669"/>
    <property type="project" value="InterPro"/>
</dbReference>
<dbReference type="GO" id="GO:0042274">
    <property type="term" value="P:ribosomal small subunit biogenesis"/>
    <property type="evidence" value="ECO:0007669"/>
    <property type="project" value="UniProtKB-UniRule"/>
</dbReference>
<dbReference type="GO" id="GO:0006364">
    <property type="term" value="P:rRNA processing"/>
    <property type="evidence" value="ECO:0007669"/>
    <property type="project" value="UniProtKB-UniRule"/>
</dbReference>
<dbReference type="Gene3D" id="2.30.30.240">
    <property type="entry name" value="PRC-barrel domain"/>
    <property type="match status" value="1"/>
</dbReference>
<dbReference type="Gene3D" id="2.40.30.60">
    <property type="entry name" value="RimM"/>
    <property type="match status" value="1"/>
</dbReference>
<dbReference type="HAMAP" id="MF_00014">
    <property type="entry name" value="Ribosome_mat_RimM"/>
    <property type="match status" value="1"/>
</dbReference>
<dbReference type="InterPro" id="IPR011033">
    <property type="entry name" value="PRC_barrel-like_sf"/>
</dbReference>
<dbReference type="InterPro" id="IPR056792">
    <property type="entry name" value="PRC_RimM"/>
</dbReference>
<dbReference type="InterPro" id="IPR011961">
    <property type="entry name" value="RimM"/>
</dbReference>
<dbReference type="InterPro" id="IPR002676">
    <property type="entry name" value="RimM_N"/>
</dbReference>
<dbReference type="InterPro" id="IPR036976">
    <property type="entry name" value="RimM_N_sf"/>
</dbReference>
<dbReference type="InterPro" id="IPR009000">
    <property type="entry name" value="Transl_B-barrel_sf"/>
</dbReference>
<dbReference type="NCBIfam" id="TIGR02273">
    <property type="entry name" value="16S_RimM"/>
    <property type="match status" value="1"/>
</dbReference>
<dbReference type="PANTHER" id="PTHR33692">
    <property type="entry name" value="RIBOSOME MATURATION FACTOR RIMM"/>
    <property type="match status" value="1"/>
</dbReference>
<dbReference type="PANTHER" id="PTHR33692:SF1">
    <property type="entry name" value="RIBOSOME MATURATION FACTOR RIMM"/>
    <property type="match status" value="1"/>
</dbReference>
<dbReference type="Pfam" id="PF24986">
    <property type="entry name" value="PRC_RimM"/>
    <property type="match status" value="1"/>
</dbReference>
<dbReference type="Pfam" id="PF01782">
    <property type="entry name" value="RimM"/>
    <property type="match status" value="1"/>
</dbReference>
<dbReference type="SUPFAM" id="SSF50346">
    <property type="entry name" value="PRC-barrel domain"/>
    <property type="match status" value="1"/>
</dbReference>
<dbReference type="SUPFAM" id="SSF50447">
    <property type="entry name" value="Translation proteins"/>
    <property type="match status" value="1"/>
</dbReference>
<reference key="1">
    <citation type="journal article" date="2007" name="PLoS ONE">
        <title>Molecular correlates of host specialization in Staphylococcus aureus.</title>
        <authorList>
            <person name="Herron-Olson L."/>
            <person name="Fitzgerald J.R."/>
            <person name="Musser J.M."/>
            <person name="Kapur V."/>
        </authorList>
    </citation>
    <scope>NUCLEOTIDE SEQUENCE [LARGE SCALE GENOMIC DNA]</scope>
    <source>
        <strain>bovine RF122 / ET3-1</strain>
    </source>
</reference>
<gene>
    <name evidence="1" type="primary">rimM</name>
    <name type="ordered locus">SAB1103</name>
</gene>
<accession>Q2YXK2</accession>
<evidence type="ECO:0000255" key="1">
    <source>
        <dbReference type="HAMAP-Rule" id="MF_00014"/>
    </source>
</evidence>